<protein>
    <recommendedName>
        <fullName>Alcohol dehydrogenase</fullName>
        <ecNumber>1.1.1.1</ecNumber>
    </recommendedName>
</protein>
<sequence length="254" mass="27617">MSLTNKNVVFVAGLGGIGLDTSRELVKRNLKNLVILDRIDNPAAIAELKAINPKVTITFYPYDVTVPVAETTKLLKTIFAQVKTIDVLINGAGILDDHQIERTIAVNYTGLVNTTTAILDFWDKRKGGPGGIICNIGSVTGFNAIYQVPVYSGSKAAVVNFTSSLAKLAPITGVTAYTVNPGITKTTLVHKFNSWLDVEPRVAEKLLEHPTQTSQQCAENFVKAIELNKNGAIWKLDLGTLEPITWTQHWDSGI</sequence>
<reference key="1">
    <citation type="journal article" date="1987" name="Genetics">
        <title>Nucleotide sequence of the Adh gene region of Drosophila pseudoobscura: evolutionary change and evidence for an ancient gene duplication.</title>
        <authorList>
            <person name="Schaeffer S.W."/>
            <person name="Aquadro C.F."/>
        </authorList>
    </citation>
    <scope>NUCLEOTIDE SEQUENCE [GENOMIC DNA]</scope>
</reference>
<reference key="2">
    <citation type="journal article" date="1991" name="Proc. Natl. Acad. Sci. U.S.A.">
        <title>Nucleotide sequence analysis of Adh genes estimates the time of geographic isolation of the Bogota population of Drosophila pseudoobscura.</title>
        <authorList>
            <person name="Schaeffer S.W."/>
            <person name="Miller E.L."/>
        </authorList>
    </citation>
    <scope>NUCLEOTIDE SEQUENCE [GENOMIC DNA]</scope>
</reference>
<reference key="3">
    <citation type="journal article" date="1992" name="Genetics">
        <title>Molecular population genetics of an electrophoretically monomorphic protein in the alcohol dehydrogenase region of Drosophila pseudoobscura.</title>
        <authorList>
            <person name="Schaeffer S.W."/>
            <person name="Miller E.L."/>
        </authorList>
    </citation>
    <scope>NUCLEOTIDE SEQUENCE [GENOMIC DNA]</scope>
    <source>
        <strain>PS163</strain>
        <strain>PS164</strain>
        <strain>PS170</strain>
        <strain>PS192</strain>
        <strain>PS214</strain>
        <strain>PS219</strain>
        <strain>PS220</strain>
        <strain>PS224</strain>
        <strain>PS230</strain>
        <strain>PS243</strain>
        <strain>PS245</strain>
        <strain>PS261</strain>
        <strain>PS262</strain>
        <strain>PS265</strain>
        <strain>PS274</strain>
        <strain>PS279</strain>
        <strain>PS281</strain>
        <strain>PS282</strain>
        <strain>PS283</strain>
        <strain>PS287</strain>
        <strain>PS289</strain>
        <strain>PS297</strain>
    </source>
</reference>
<reference key="4">
    <citation type="journal article" date="1992" name="Genetics">
        <title>Estimates of gene flow in Drosophila pseudoobscura determined from nucleotide sequence analysis of the alcohol dehydrogenase region.</title>
        <authorList>
            <person name="Schaeffer S.W."/>
            <person name="Miller E.L."/>
        </authorList>
    </citation>
    <scope>NUCLEOTIDE SEQUENCE [GENOMIC DNA]</scope>
    <source>
        <strain>BC414</strain>
        <strain>BC86</strain>
        <strain>BC93</strain>
        <strain>BJ855</strain>
        <strain>BN16</strain>
        <strain>BR10F</strain>
        <strain>BR3F</strain>
        <strain>BR5F</strain>
        <strain>BR7F</strain>
        <strain>BR8F</strain>
        <strain>GB103</strain>
        <strain>GB104</strain>
        <strain>GB109</strain>
        <strain>GB112</strain>
        <strain>GB114</strain>
        <strain>GB116</strain>
        <strain>GB118</strain>
        <strain>GB119</strain>
        <strain>GB12</strain>
        <strain>GB13</strain>
        <strain>GB24</strain>
        <strain>GB26</strain>
        <strain>GB27</strain>
        <strain>GB32</strain>
        <strain>GB33</strain>
        <strain>GB41</strain>
        <strain>GB54</strain>
        <strain>GB59</strain>
        <strain>GB66</strain>
        <strain>GB68</strain>
        <strain>GB69</strain>
        <strain>GB78</strain>
        <strain>GB82</strain>
        <strain>GB91</strain>
        <strain>GB92</strain>
        <strain>GB96</strain>
        <strain>GC4</strain>
        <strain>MT228</strain>
        <strain>MT350</strain>
        <strain>MV21</strain>
        <strain>MV27</strain>
        <strain>MV28</strain>
        <strain>MV36</strain>
        <strain>MV43</strain>
        <strain>MXA31</strain>
        <strain>MXA64</strain>
        <strain>MXZ26</strain>
        <strain>OREG3</strain>
        <strain>OREG4</strain>
        <strain>PS101</strain>
        <strain>PS102</strain>
        <strain>PS108</strain>
        <strain>PS126</strain>
        <strain>PS139</strain>
        <strain>SB14</strain>
        <strain>SB18</strain>
        <strain>SB2</strain>
        <strain>SB6</strain>
    </source>
</reference>
<reference key="5">
    <citation type="journal article" date="1993" name="Genetics">
        <title>Estimates of linkage disequilibrium and the recombination parameter determined from segregating nucleotide sites in the alcohol dehydrogenase region of Drosophila pseudoobscura.</title>
        <authorList>
            <person name="Schaeffer S.W."/>
            <person name="Miller E.L."/>
        </authorList>
    </citation>
    <scope>NUCLEOTIDE SEQUENCE [GENOMIC DNA]</scope>
    <source>
        <strain>PS298</strain>
        <strain>PS299</strain>
        <strain>PS302</strain>
        <strain>PS306</strain>
        <strain>PS309</strain>
        <strain>PS314</strain>
        <strain>PS315</strain>
        <strain>PS316</strain>
    </source>
</reference>
<reference key="6">
    <citation type="journal article" date="2002" name="Genet. Res.">
        <title>Molecular population genetics of sequence length diversity in the Adh region of Drosophila pseudoobscura.</title>
        <authorList>
            <person name="Schaeffer S.W."/>
        </authorList>
    </citation>
    <scope>NUCLEOTIDE SEQUENCE [GENOMIC DNA]</scope>
    <source>
        <strain>GB48</strain>
        <strain>PS228</strain>
        <strain>PS231</strain>
        <strain>PS232</strain>
        <strain>PS236</strain>
        <strain>PS242</strain>
        <strain>PS246</strain>
        <strain>PS248</strain>
        <strain>PS251</strain>
        <strain>PS254</strain>
        <strain>PS256</strain>
        <strain>PS260</strain>
        <strain>PS267</strain>
        <strain>PS268</strain>
        <strain>PS271</strain>
        <strain>PS273</strain>
        <strain>PS277</strain>
        <strain>PS280</strain>
        <strain>PS295</strain>
        <strain>PS296</strain>
        <strain>PS301</strain>
        <strain>PS308</strain>
        <strain>PS311</strain>
        <strain>PS317</strain>
        <strain>PS320</strain>
        <strain>PS322</strain>
        <strain>PS323</strain>
        <strain>PS329</strain>
        <strain>PS331</strain>
        <strain>PS333</strain>
        <strain>PS334</strain>
        <strain>PS336</strain>
        <strain>PS342</strain>
        <strain>PS343</strain>
        <strain>PS348</strain>
        <strain>PS350</strain>
        <strain>PS352</strain>
        <strain>PS353</strain>
        <strain>PS356</strain>
        <strain>PS367</strain>
    </source>
</reference>
<reference key="7">
    <citation type="journal article" date="2005" name="Genome Res.">
        <title>Comparative genome sequencing of Drosophila pseudoobscura: chromosomal, gene, and cis-element evolution.</title>
        <authorList>
            <person name="Richards S."/>
            <person name="Liu Y."/>
            <person name="Bettencourt B.R."/>
            <person name="Hradecky P."/>
            <person name="Letovsky S."/>
            <person name="Nielsen R."/>
            <person name="Thornton K."/>
            <person name="Hubisz M.J."/>
            <person name="Chen R."/>
            <person name="Meisel R.P."/>
            <person name="Couronne O."/>
            <person name="Hua S."/>
            <person name="Smith M.A."/>
            <person name="Zhang P."/>
            <person name="Liu J."/>
            <person name="Bussemaker H.J."/>
            <person name="van Batenburg M.F."/>
            <person name="Howells S.L."/>
            <person name="Scherer S.E."/>
            <person name="Sodergren E."/>
            <person name="Matthews B.B."/>
            <person name="Crosby M.A."/>
            <person name="Schroeder A.J."/>
            <person name="Ortiz-Barrientos D."/>
            <person name="Rives C.M."/>
            <person name="Metzker M.L."/>
            <person name="Muzny D.M."/>
            <person name="Scott G."/>
            <person name="Steffen D."/>
            <person name="Wheeler D.A."/>
            <person name="Worley K.C."/>
            <person name="Havlak P."/>
            <person name="Durbin K.J."/>
            <person name="Egan A."/>
            <person name="Gill R."/>
            <person name="Hume J."/>
            <person name="Morgan M.B."/>
            <person name="Miner G."/>
            <person name="Hamilton C."/>
            <person name="Huang Y."/>
            <person name="Waldron L."/>
            <person name="Verduzco D."/>
            <person name="Clerc-Blankenburg K.P."/>
            <person name="Dubchak I."/>
            <person name="Noor M.A.F."/>
            <person name="Anderson W."/>
            <person name="White K.P."/>
            <person name="Clark A.G."/>
            <person name="Schaeffer S.W."/>
            <person name="Gelbart W.M."/>
            <person name="Weinstock G.M."/>
            <person name="Gibbs R.A."/>
        </authorList>
    </citation>
    <scope>NUCLEOTIDE SEQUENCE [LARGE SCALE GENOMIC DNA]</scope>
    <source>
        <strain>MV2-25 / Tucson 14011-0121.94</strain>
    </source>
</reference>
<feature type="initiator methionine" description="Removed" evidence="1">
    <location>
        <position position="1"/>
    </location>
</feature>
<feature type="chain" id="PRO_0000054491" description="Alcohol dehydrogenase">
    <location>
        <begin position="2"/>
        <end position="254"/>
    </location>
</feature>
<feature type="active site" description="Proton acceptor" evidence="2">
    <location>
        <position position="151"/>
    </location>
</feature>
<feature type="binding site" evidence="1">
    <location>
        <begin position="10"/>
        <end position="33"/>
    </location>
    <ligand>
        <name>NAD(+)</name>
        <dbReference type="ChEBI" id="CHEBI:57540"/>
    </ligand>
</feature>
<feature type="binding site" evidence="1">
    <location>
        <position position="138"/>
    </location>
    <ligand>
        <name>substrate</name>
    </ligand>
</feature>
<feature type="sequence variant" description="In strain: PS246.">
    <original>V</original>
    <variation>F</variation>
    <location>
        <position position="34"/>
    </location>
</feature>
<feature type="sequence variant" description="In strain: PS230.">
    <original>V</original>
    <variation>I</variation>
    <location>
        <position position="68"/>
    </location>
</feature>
<feature type="sequence variant" description="In strain: PS295.">
    <original>K</original>
    <variation>R</variation>
    <location>
        <position position="185"/>
    </location>
</feature>
<comment type="catalytic activity">
    <reaction evidence="2">
        <text>a primary alcohol + NAD(+) = an aldehyde + NADH + H(+)</text>
        <dbReference type="Rhea" id="RHEA:10736"/>
        <dbReference type="ChEBI" id="CHEBI:15378"/>
        <dbReference type="ChEBI" id="CHEBI:15734"/>
        <dbReference type="ChEBI" id="CHEBI:17478"/>
        <dbReference type="ChEBI" id="CHEBI:57540"/>
        <dbReference type="ChEBI" id="CHEBI:57945"/>
        <dbReference type="EC" id="1.1.1.1"/>
    </reaction>
</comment>
<comment type="catalytic activity">
    <reaction evidence="2">
        <text>a secondary alcohol + NAD(+) = a ketone + NADH + H(+)</text>
        <dbReference type="Rhea" id="RHEA:10740"/>
        <dbReference type="ChEBI" id="CHEBI:15378"/>
        <dbReference type="ChEBI" id="CHEBI:17087"/>
        <dbReference type="ChEBI" id="CHEBI:35681"/>
        <dbReference type="ChEBI" id="CHEBI:57540"/>
        <dbReference type="ChEBI" id="CHEBI:57945"/>
        <dbReference type="EC" id="1.1.1.1"/>
    </reaction>
</comment>
<comment type="subunit">
    <text>Homodimer.</text>
</comment>
<comment type="similarity">
    <text evidence="3">Belongs to the short-chain dehydrogenases/reductases (SDR) family.</text>
</comment>
<comment type="sequence caution" evidence="3">
    <conflict type="erroneous gene model prediction">
        <sequence resource="EMBL-CDS" id="EAL34444"/>
    </conflict>
</comment>
<organism>
    <name type="scientific">Drosophila pseudoobscura pseudoobscura</name>
    <name type="common">Fruit fly</name>
    <dbReference type="NCBI Taxonomy" id="46245"/>
    <lineage>
        <taxon>Eukaryota</taxon>
        <taxon>Metazoa</taxon>
        <taxon>Ecdysozoa</taxon>
        <taxon>Arthropoda</taxon>
        <taxon>Hexapoda</taxon>
        <taxon>Insecta</taxon>
        <taxon>Pterygota</taxon>
        <taxon>Neoptera</taxon>
        <taxon>Endopterygota</taxon>
        <taxon>Diptera</taxon>
        <taxon>Brachycera</taxon>
        <taxon>Muscomorpha</taxon>
        <taxon>Ephydroidea</taxon>
        <taxon>Drosophilidae</taxon>
        <taxon>Drosophila</taxon>
        <taxon>Sophophora</taxon>
    </lineage>
</organism>
<accession>Q6LCE4</accession>
<accession>P07158</accession>
<accession>Q27613</accession>
<accession>Q29P49</accession>
<accession>Q95092</accession>
<keyword id="KW-0520">NAD</keyword>
<keyword id="KW-0560">Oxidoreductase</keyword>
<keyword id="KW-1185">Reference proteome</keyword>
<dbReference type="EC" id="1.1.1.1"/>
<dbReference type="EMBL" id="Y00602">
    <property type="protein sequence ID" value="CAA68645.1"/>
    <property type="molecule type" value="Genomic_DNA"/>
</dbReference>
<dbReference type="EMBL" id="M60979">
    <property type="protein sequence ID" value="AAA99022.1"/>
    <property type="molecule type" value="Genomic_DNA"/>
</dbReference>
<dbReference type="EMBL" id="M60980">
    <property type="protein sequence ID" value="AAA99023.1"/>
    <property type="molecule type" value="Genomic_DNA"/>
</dbReference>
<dbReference type="EMBL" id="M60981">
    <property type="protein sequence ID" value="AAA99025.1"/>
    <property type="molecule type" value="Genomic_DNA"/>
</dbReference>
<dbReference type="EMBL" id="M60982">
    <property type="protein sequence ID" value="AAA99016.1"/>
    <property type="molecule type" value="Genomic_DNA"/>
</dbReference>
<dbReference type="EMBL" id="M60981">
    <property type="protein sequence ID" value="AAA99016.1"/>
    <property type="status" value="JOINED"/>
    <property type="molecule type" value="Genomic_DNA"/>
</dbReference>
<dbReference type="EMBL" id="M60983">
    <property type="protein sequence ID" value="AAA99017.1"/>
    <property type="molecule type" value="Genomic_DNA"/>
</dbReference>
<dbReference type="EMBL" id="M60984">
    <property type="protein sequence ID" value="AAA99018.1"/>
    <property type="molecule type" value="Genomic_DNA"/>
</dbReference>
<dbReference type="EMBL" id="M60985">
    <property type="protein sequence ID" value="AAA99020.1"/>
    <property type="molecule type" value="Genomic_DNA"/>
</dbReference>
<dbReference type="EMBL" id="M60986">
    <property type="protein sequence ID" value="AAA99019.1"/>
    <property type="molecule type" value="Genomic_DNA"/>
</dbReference>
<dbReference type="EMBL" id="M60987">
    <property type="protein sequence ID" value="AAA99021.1"/>
    <property type="molecule type" value="Genomic_DNA"/>
</dbReference>
<dbReference type="EMBL" id="M60988">
    <property type="protein sequence ID" value="AAA99024.1"/>
    <property type="molecule type" value="Genomic_DNA"/>
</dbReference>
<dbReference type="EMBL" id="X64468">
    <property type="protein sequence ID" value="CAA45797.1"/>
    <property type="molecule type" value="Genomic_DNA"/>
</dbReference>
<dbReference type="EMBL" id="X64469">
    <property type="protein sequence ID" value="CAA45798.1"/>
    <property type="molecule type" value="Genomic_DNA"/>
</dbReference>
<dbReference type="EMBL" id="X64470">
    <property type="protein sequence ID" value="CAA45799.1"/>
    <property type="molecule type" value="Genomic_DNA"/>
</dbReference>
<dbReference type="EMBL" id="X64471">
    <property type="protein sequence ID" value="CAA45800.1"/>
    <property type="molecule type" value="Genomic_DNA"/>
</dbReference>
<dbReference type="EMBL" id="X64472">
    <property type="protein sequence ID" value="CAA45801.1"/>
    <property type="molecule type" value="Genomic_DNA"/>
</dbReference>
<dbReference type="EMBL" id="X64473">
    <property type="protein sequence ID" value="CAA45802.1"/>
    <property type="molecule type" value="Genomic_DNA"/>
</dbReference>
<dbReference type="EMBL" id="X64474">
    <property type="protein sequence ID" value="CAA45803.1"/>
    <property type="molecule type" value="Genomic_DNA"/>
</dbReference>
<dbReference type="EMBL" id="X64475">
    <property type="protein sequence ID" value="CAA45804.1"/>
    <property type="molecule type" value="Genomic_DNA"/>
</dbReference>
<dbReference type="EMBL" id="X64476">
    <property type="protein sequence ID" value="CAA45805.1"/>
    <property type="molecule type" value="Genomic_DNA"/>
</dbReference>
<dbReference type="EMBL" id="X64477">
    <property type="protein sequence ID" value="CAA45806.1"/>
    <property type="molecule type" value="Genomic_DNA"/>
</dbReference>
<dbReference type="EMBL" id="X64478">
    <property type="protein sequence ID" value="CAA45807.1"/>
    <property type="molecule type" value="Genomic_DNA"/>
</dbReference>
<dbReference type="EMBL" id="X64479">
    <property type="protein sequence ID" value="CAA45808.1"/>
    <property type="molecule type" value="Genomic_DNA"/>
</dbReference>
<dbReference type="EMBL" id="X64480">
    <property type="protein sequence ID" value="CAA45809.1"/>
    <property type="molecule type" value="Genomic_DNA"/>
</dbReference>
<dbReference type="EMBL" id="X64481">
    <property type="protein sequence ID" value="CAA45810.1"/>
    <property type="molecule type" value="Genomic_DNA"/>
</dbReference>
<dbReference type="EMBL" id="X64482">
    <property type="protein sequence ID" value="CAA45811.1"/>
    <property type="molecule type" value="Genomic_DNA"/>
</dbReference>
<dbReference type="EMBL" id="X64483">
    <property type="protein sequence ID" value="CAA45812.1"/>
    <property type="molecule type" value="Genomic_DNA"/>
</dbReference>
<dbReference type="EMBL" id="X64484">
    <property type="protein sequence ID" value="CAA45813.1"/>
    <property type="molecule type" value="Genomic_DNA"/>
</dbReference>
<dbReference type="EMBL" id="X64485">
    <property type="protein sequence ID" value="CAA45814.1"/>
    <property type="molecule type" value="Genomic_DNA"/>
</dbReference>
<dbReference type="EMBL" id="X64486">
    <property type="protein sequence ID" value="CAA45815.1"/>
    <property type="molecule type" value="Genomic_DNA"/>
</dbReference>
<dbReference type="EMBL" id="X64487">
    <property type="protein sequence ID" value="CAA45816.1"/>
    <property type="molecule type" value="Genomic_DNA"/>
</dbReference>
<dbReference type="EMBL" id="X64488">
    <property type="protein sequence ID" value="CAA45817.1"/>
    <property type="molecule type" value="Genomic_DNA"/>
</dbReference>
<dbReference type="EMBL" id="X64489">
    <property type="protein sequence ID" value="CAA45818.1"/>
    <property type="molecule type" value="Genomic_DNA"/>
</dbReference>
<dbReference type="EMBL" id="X62181">
    <property type="protein sequence ID" value="CAA44102.1"/>
    <property type="molecule type" value="Genomic_DNA"/>
</dbReference>
<dbReference type="EMBL" id="X62182">
    <property type="protein sequence ID" value="CAA44103.1"/>
    <property type="molecule type" value="Genomic_DNA"/>
</dbReference>
<dbReference type="EMBL" id="X62183">
    <property type="protein sequence ID" value="CAA44104.1"/>
    <property type="molecule type" value="Genomic_DNA"/>
</dbReference>
<dbReference type="EMBL" id="X62184">
    <property type="protein sequence ID" value="CAA44105.1"/>
    <property type="molecule type" value="Genomic_DNA"/>
</dbReference>
<dbReference type="EMBL" id="X62185">
    <property type="protein sequence ID" value="CAA44106.1"/>
    <property type="molecule type" value="Genomic_DNA"/>
</dbReference>
<dbReference type="EMBL" id="X62186">
    <property type="protein sequence ID" value="CAA44107.1"/>
    <property type="molecule type" value="Genomic_DNA"/>
</dbReference>
<dbReference type="EMBL" id="X62187">
    <property type="protein sequence ID" value="CAA44108.1"/>
    <property type="molecule type" value="Genomic_DNA"/>
</dbReference>
<dbReference type="EMBL" id="X62188">
    <property type="protein sequence ID" value="CAA44109.1"/>
    <property type="molecule type" value="Genomic_DNA"/>
</dbReference>
<dbReference type="EMBL" id="X62189">
    <property type="protein sequence ID" value="CAA44110.1"/>
    <property type="molecule type" value="Genomic_DNA"/>
</dbReference>
<dbReference type="EMBL" id="X62190">
    <property type="protein sequence ID" value="CAA44111.1"/>
    <property type="molecule type" value="Genomic_DNA"/>
</dbReference>
<dbReference type="EMBL" id="X62191">
    <property type="protein sequence ID" value="CAA44112.1"/>
    <property type="molecule type" value="Genomic_DNA"/>
</dbReference>
<dbReference type="EMBL" id="X62192">
    <property type="protein sequence ID" value="CAA44113.1"/>
    <property type="molecule type" value="Genomic_DNA"/>
</dbReference>
<dbReference type="EMBL" id="X62193">
    <property type="protein sequence ID" value="CAA44114.1"/>
    <property type="molecule type" value="Genomic_DNA"/>
</dbReference>
<dbReference type="EMBL" id="X62194">
    <property type="protein sequence ID" value="CAA44115.1"/>
    <property type="molecule type" value="Genomic_DNA"/>
</dbReference>
<dbReference type="EMBL" id="X62195">
    <property type="protein sequence ID" value="CAA44116.1"/>
    <property type="molecule type" value="Genomic_DNA"/>
</dbReference>
<dbReference type="EMBL" id="X62196">
    <property type="protein sequence ID" value="CAA44117.1"/>
    <property type="molecule type" value="Genomic_DNA"/>
</dbReference>
<dbReference type="EMBL" id="X62197">
    <property type="protein sequence ID" value="CAA44118.1"/>
    <property type="molecule type" value="Genomic_DNA"/>
</dbReference>
<dbReference type="EMBL" id="X62198">
    <property type="protein sequence ID" value="CAA44119.1"/>
    <property type="molecule type" value="Genomic_DNA"/>
</dbReference>
<dbReference type="EMBL" id="X62199">
    <property type="protein sequence ID" value="CAA44120.1"/>
    <property type="molecule type" value="Genomic_DNA"/>
</dbReference>
<dbReference type="EMBL" id="X62200">
    <property type="protein sequence ID" value="CAA44121.1"/>
    <property type="molecule type" value="Genomic_DNA"/>
</dbReference>
<dbReference type="EMBL" id="X62201">
    <property type="protein sequence ID" value="CAA44122.1"/>
    <property type="molecule type" value="Genomic_DNA"/>
</dbReference>
<dbReference type="EMBL" id="X62202">
    <property type="protein sequence ID" value="CAA44123.1"/>
    <property type="molecule type" value="Genomic_DNA"/>
</dbReference>
<dbReference type="EMBL" id="X62203">
    <property type="protein sequence ID" value="CAA44124.1"/>
    <property type="molecule type" value="Genomic_DNA"/>
</dbReference>
<dbReference type="EMBL" id="X62204">
    <property type="protein sequence ID" value="CAA44125.1"/>
    <property type="molecule type" value="Genomic_DNA"/>
</dbReference>
<dbReference type="EMBL" id="X62205">
    <property type="protein sequence ID" value="CAA44126.1"/>
    <property type="molecule type" value="Genomic_DNA"/>
</dbReference>
<dbReference type="EMBL" id="X62206">
    <property type="protein sequence ID" value="CAA44127.1"/>
    <property type="molecule type" value="Genomic_DNA"/>
</dbReference>
<dbReference type="EMBL" id="X62207">
    <property type="protein sequence ID" value="CAA44128.1"/>
    <property type="molecule type" value="Genomic_DNA"/>
</dbReference>
<dbReference type="EMBL" id="X62208">
    <property type="protein sequence ID" value="CAA44129.1"/>
    <property type="molecule type" value="Genomic_DNA"/>
</dbReference>
<dbReference type="EMBL" id="X62209">
    <property type="protein sequence ID" value="CAA44130.1"/>
    <property type="molecule type" value="Genomic_DNA"/>
</dbReference>
<dbReference type="EMBL" id="X62210">
    <property type="protein sequence ID" value="CAA44131.1"/>
    <property type="molecule type" value="Genomic_DNA"/>
</dbReference>
<dbReference type="EMBL" id="X62211">
    <property type="protein sequence ID" value="CAA44132.1"/>
    <property type="molecule type" value="Genomic_DNA"/>
</dbReference>
<dbReference type="EMBL" id="X62212">
    <property type="protein sequence ID" value="CAA44133.1"/>
    <property type="molecule type" value="Genomic_DNA"/>
</dbReference>
<dbReference type="EMBL" id="X62213">
    <property type="protein sequence ID" value="CAA44134.1"/>
    <property type="molecule type" value="Genomic_DNA"/>
</dbReference>
<dbReference type="EMBL" id="X62214">
    <property type="protein sequence ID" value="CAA44135.1"/>
    <property type="molecule type" value="Genomic_DNA"/>
</dbReference>
<dbReference type="EMBL" id="X62215">
    <property type="protein sequence ID" value="CAA44136.1"/>
    <property type="molecule type" value="Genomic_DNA"/>
</dbReference>
<dbReference type="EMBL" id="X62216">
    <property type="protein sequence ID" value="CAA44137.1"/>
    <property type="molecule type" value="Genomic_DNA"/>
</dbReference>
<dbReference type="EMBL" id="X62217">
    <property type="protein sequence ID" value="CAA44138.1"/>
    <property type="molecule type" value="Genomic_DNA"/>
</dbReference>
<dbReference type="EMBL" id="X62218">
    <property type="protein sequence ID" value="CAA44139.1"/>
    <property type="molecule type" value="Genomic_DNA"/>
</dbReference>
<dbReference type="EMBL" id="X62219">
    <property type="protein sequence ID" value="CAA44140.1"/>
    <property type="molecule type" value="Genomic_DNA"/>
</dbReference>
<dbReference type="EMBL" id="X62220">
    <property type="protein sequence ID" value="CAA44141.1"/>
    <property type="molecule type" value="Genomic_DNA"/>
</dbReference>
<dbReference type="EMBL" id="X62221">
    <property type="protein sequence ID" value="CAA44142.1"/>
    <property type="molecule type" value="Genomic_DNA"/>
</dbReference>
<dbReference type="EMBL" id="X62222">
    <property type="protein sequence ID" value="CAA44143.1"/>
    <property type="molecule type" value="Genomic_DNA"/>
</dbReference>
<dbReference type="EMBL" id="X62223">
    <property type="protein sequence ID" value="CAA44144.1"/>
    <property type="molecule type" value="Genomic_DNA"/>
</dbReference>
<dbReference type="EMBL" id="X62224">
    <property type="protein sequence ID" value="CAA44145.1"/>
    <property type="molecule type" value="Genomic_DNA"/>
</dbReference>
<dbReference type="EMBL" id="X62225">
    <property type="protein sequence ID" value="CAA44146.1"/>
    <property type="molecule type" value="Genomic_DNA"/>
</dbReference>
<dbReference type="EMBL" id="X62226">
    <property type="protein sequence ID" value="CAA44147.1"/>
    <property type="molecule type" value="Genomic_DNA"/>
</dbReference>
<dbReference type="EMBL" id="X62227">
    <property type="protein sequence ID" value="CAA44148.1"/>
    <property type="molecule type" value="Genomic_DNA"/>
</dbReference>
<dbReference type="EMBL" id="X62228">
    <property type="protein sequence ID" value="CAA44149.1"/>
    <property type="molecule type" value="Genomic_DNA"/>
</dbReference>
<dbReference type="EMBL" id="X62229">
    <property type="protein sequence ID" value="CAA44150.1"/>
    <property type="molecule type" value="Genomic_DNA"/>
</dbReference>
<dbReference type="EMBL" id="X62230">
    <property type="protein sequence ID" value="CAA44151.1"/>
    <property type="molecule type" value="Genomic_DNA"/>
</dbReference>
<dbReference type="EMBL" id="X62231">
    <property type="protein sequence ID" value="CAA44152.1"/>
    <property type="molecule type" value="Genomic_DNA"/>
</dbReference>
<dbReference type="EMBL" id="X62232">
    <property type="protein sequence ID" value="CAA44153.1"/>
    <property type="molecule type" value="Genomic_DNA"/>
</dbReference>
<dbReference type="EMBL" id="X62233">
    <property type="protein sequence ID" value="CAA44154.1"/>
    <property type="molecule type" value="Genomic_DNA"/>
</dbReference>
<dbReference type="EMBL" id="X62234">
    <property type="protein sequence ID" value="CAA44155.1"/>
    <property type="molecule type" value="Genomic_DNA"/>
</dbReference>
<dbReference type="EMBL" id="X62235">
    <property type="protein sequence ID" value="CAA44156.1"/>
    <property type="molecule type" value="Genomic_DNA"/>
</dbReference>
<dbReference type="EMBL" id="X62236">
    <property type="protein sequence ID" value="CAA44157.1"/>
    <property type="molecule type" value="Genomic_DNA"/>
</dbReference>
<dbReference type="EMBL" id="X62237">
    <property type="protein sequence ID" value="CAA44158.1"/>
    <property type="molecule type" value="Genomic_DNA"/>
</dbReference>
<dbReference type="EMBL" id="X62238">
    <property type="protein sequence ID" value="CAA44159.1"/>
    <property type="molecule type" value="Genomic_DNA"/>
</dbReference>
<dbReference type="EMBL" id="X68159">
    <property type="protein sequence ID" value="CAA48262.1"/>
    <property type="molecule type" value="Genomic_DNA"/>
</dbReference>
<dbReference type="EMBL" id="X68160">
    <property type="protein sequence ID" value="CAA48263.1"/>
    <property type="molecule type" value="Genomic_DNA"/>
</dbReference>
<dbReference type="EMBL" id="X68161">
    <property type="protein sequence ID" value="CAA48264.1"/>
    <property type="molecule type" value="Genomic_DNA"/>
</dbReference>
<dbReference type="EMBL" id="X68162">
    <property type="protein sequence ID" value="CAA48265.1"/>
    <property type="molecule type" value="Genomic_DNA"/>
</dbReference>
<dbReference type="EMBL" id="X68163">
    <property type="protein sequence ID" value="CAA48266.1"/>
    <property type="molecule type" value="Genomic_DNA"/>
</dbReference>
<dbReference type="EMBL" id="X68164">
    <property type="protein sequence ID" value="CAA48267.1"/>
    <property type="molecule type" value="Genomic_DNA"/>
</dbReference>
<dbReference type="EMBL" id="X68165">
    <property type="protein sequence ID" value="CAA48268.1"/>
    <property type="molecule type" value="Genomic_DNA"/>
</dbReference>
<dbReference type="EMBL" id="X68166">
    <property type="protein sequence ID" value="CAA48269.1"/>
    <property type="molecule type" value="Genomic_DNA"/>
</dbReference>
<dbReference type="EMBL" id="U64521">
    <property type="protein sequence ID" value="AAB06136.1"/>
    <property type="molecule type" value="Genomic_DNA"/>
</dbReference>
<dbReference type="EMBL" id="U64522">
    <property type="protein sequence ID" value="AAB06137.1"/>
    <property type="molecule type" value="Genomic_DNA"/>
</dbReference>
<dbReference type="EMBL" id="U64523">
    <property type="protein sequence ID" value="AAB06138.1"/>
    <property type="molecule type" value="Genomic_DNA"/>
</dbReference>
<dbReference type="EMBL" id="U64524">
    <property type="protein sequence ID" value="AAB06139.1"/>
    <property type="molecule type" value="Genomic_DNA"/>
</dbReference>
<dbReference type="EMBL" id="U64525">
    <property type="protein sequence ID" value="AAB06140.1"/>
    <property type="molecule type" value="Genomic_DNA"/>
</dbReference>
<dbReference type="EMBL" id="U64526">
    <property type="protein sequence ID" value="AAB06141.1"/>
    <property type="molecule type" value="Genomic_DNA"/>
</dbReference>
<dbReference type="EMBL" id="U64527">
    <property type="protein sequence ID" value="AAB06142.1"/>
    <property type="molecule type" value="Genomic_DNA"/>
</dbReference>
<dbReference type="EMBL" id="U64528">
    <property type="protein sequence ID" value="AAB06143.1"/>
    <property type="molecule type" value="Genomic_DNA"/>
</dbReference>
<dbReference type="EMBL" id="U64529">
    <property type="protein sequence ID" value="AAB06144.1"/>
    <property type="molecule type" value="Genomic_DNA"/>
</dbReference>
<dbReference type="EMBL" id="U64530">
    <property type="protein sequence ID" value="AAB06145.1"/>
    <property type="molecule type" value="Genomic_DNA"/>
</dbReference>
<dbReference type="EMBL" id="U64531">
    <property type="protein sequence ID" value="AAB06146.1"/>
    <property type="molecule type" value="Genomic_DNA"/>
</dbReference>
<dbReference type="EMBL" id="U64532">
    <property type="protein sequence ID" value="AAB06147.1"/>
    <property type="molecule type" value="Genomic_DNA"/>
</dbReference>
<dbReference type="EMBL" id="U64533">
    <property type="protein sequence ID" value="AAB06148.1"/>
    <property type="molecule type" value="Genomic_DNA"/>
</dbReference>
<dbReference type="EMBL" id="U64534">
    <property type="protein sequence ID" value="AAB06149.1"/>
    <property type="molecule type" value="Genomic_DNA"/>
</dbReference>
<dbReference type="EMBL" id="U64535">
    <property type="protein sequence ID" value="AAB06150.1"/>
    <property type="molecule type" value="Genomic_DNA"/>
</dbReference>
<dbReference type="EMBL" id="U64536">
    <property type="protein sequence ID" value="AAB06151.1"/>
    <property type="molecule type" value="Genomic_DNA"/>
</dbReference>
<dbReference type="EMBL" id="U64537">
    <property type="protein sequence ID" value="AAB06152.1"/>
    <property type="molecule type" value="Genomic_DNA"/>
</dbReference>
<dbReference type="EMBL" id="U64538">
    <property type="protein sequence ID" value="AAB06153.1"/>
    <property type="molecule type" value="Genomic_DNA"/>
</dbReference>
<dbReference type="EMBL" id="U64539">
    <property type="protein sequence ID" value="AAB06154.1"/>
    <property type="molecule type" value="Genomic_DNA"/>
</dbReference>
<dbReference type="EMBL" id="U64540">
    <property type="protein sequence ID" value="AAB06155.1"/>
    <property type="molecule type" value="Genomic_DNA"/>
</dbReference>
<dbReference type="EMBL" id="U64541">
    <property type="protein sequence ID" value="AAB06156.1"/>
    <property type="molecule type" value="Genomic_DNA"/>
</dbReference>
<dbReference type="EMBL" id="U64542">
    <property type="protein sequence ID" value="AAB06157.1"/>
    <property type="molecule type" value="Genomic_DNA"/>
</dbReference>
<dbReference type="EMBL" id="U64543">
    <property type="protein sequence ID" value="AAB06158.1"/>
    <property type="molecule type" value="Genomic_DNA"/>
</dbReference>
<dbReference type="EMBL" id="U64544">
    <property type="protein sequence ID" value="AAB06159.1"/>
    <property type="molecule type" value="Genomic_DNA"/>
</dbReference>
<dbReference type="EMBL" id="U64545">
    <property type="protein sequence ID" value="AAB06160.1"/>
    <property type="molecule type" value="Genomic_DNA"/>
</dbReference>
<dbReference type="EMBL" id="U64546">
    <property type="protein sequence ID" value="AAB06161.1"/>
    <property type="molecule type" value="Genomic_DNA"/>
</dbReference>
<dbReference type="EMBL" id="U64547">
    <property type="protein sequence ID" value="AAB06162.1"/>
    <property type="molecule type" value="Genomic_DNA"/>
</dbReference>
<dbReference type="EMBL" id="U64548">
    <property type="protein sequence ID" value="AAB06163.1"/>
    <property type="molecule type" value="Genomic_DNA"/>
</dbReference>
<dbReference type="EMBL" id="U64549">
    <property type="protein sequence ID" value="AAB06164.1"/>
    <property type="molecule type" value="Genomic_DNA"/>
</dbReference>
<dbReference type="EMBL" id="U64550">
    <property type="protein sequence ID" value="AAB06165.1"/>
    <property type="molecule type" value="Genomic_DNA"/>
</dbReference>
<dbReference type="EMBL" id="U64551">
    <property type="protein sequence ID" value="AAB06166.1"/>
    <property type="molecule type" value="Genomic_DNA"/>
</dbReference>
<dbReference type="EMBL" id="U64552">
    <property type="protein sequence ID" value="AAB06167.1"/>
    <property type="molecule type" value="Genomic_DNA"/>
</dbReference>
<dbReference type="EMBL" id="U64553">
    <property type="protein sequence ID" value="AAB06168.1"/>
    <property type="molecule type" value="Genomic_DNA"/>
</dbReference>
<dbReference type="EMBL" id="U64554">
    <property type="protein sequence ID" value="AAB06169.1"/>
    <property type="molecule type" value="Genomic_DNA"/>
</dbReference>
<dbReference type="EMBL" id="U64555">
    <property type="protein sequence ID" value="AAB06170.1"/>
    <property type="molecule type" value="Genomic_DNA"/>
</dbReference>
<dbReference type="EMBL" id="U64556">
    <property type="protein sequence ID" value="AAB06171.1"/>
    <property type="molecule type" value="Genomic_DNA"/>
</dbReference>
<dbReference type="EMBL" id="U64557">
    <property type="protein sequence ID" value="AAB06172.1"/>
    <property type="molecule type" value="Genomic_DNA"/>
</dbReference>
<dbReference type="EMBL" id="U64558">
    <property type="protein sequence ID" value="AAB06173.1"/>
    <property type="molecule type" value="Genomic_DNA"/>
</dbReference>
<dbReference type="EMBL" id="U64559">
    <property type="protein sequence ID" value="AAB06174.1"/>
    <property type="molecule type" value="Genomic_DNA"/>
</dbReference>
<dbReference type="EMBL" id="U64560">
    <property type="protein sequence ID" value="AAB06175.1"/>
    <property type="molecule type" value="Genomic_DNA"/>
</dbReference>
<dbReference type="EMBL" id="CH379058">
    <property type="protein sequence ID" value="EAL34444.1"/>
    <property type="status" value="ALT_SEQ"/>
    <property type="molecule type" value="Genomic_DNA"/>
</dbReference>
<dbReference type="PIR" id="S06292">
    <property type="entry name" value="S06292"/>
</dbReference>
<dbReference type="PIR" id="S26769">
    <property type="entry name" value="S26769"/>
</dbReference>
<dbReference type="PIR" id="S26770">
    <property type="entry name" value="S26770"/>
</dbReference>
<dbReference type="PIR" id="S26779">
    <property type="entry name" value="S26779"/>
</dbReference>
<dbReference type="SMR" id="Q6LCE4"/>
<dbReference type="FunCoup" id="Q6LCE4">
    <property type="interactions" value="298"/>
</dbReference>
<dbReference type="STRING" id="46245.Q6LCE4"/>
<dbReference type="eggNOG" id="KOG4169">
    <property type="taxonomic scope" value="Eukaryota"/>
</dbReference>
<dbReference type="HOGENOM" id="CLU_010194_2_16_1"/>
<dbReference type="InParanoid" id="Q6LCE4"/>
<dbReference type="OMA" id="WSKHWDS"/>
<dbReference type="PhylomeDB" id="Q6LCE4"/>
<dbReference type="ChiTaRS" id="Adh">
    <property type="organism name" value="fly"/>
</dbReference>
<dbReference type="Proteomes" id="UP000001819">
    <property type="component" value="Unplaced"/>
</dbReference>
<dbReference type="GO" id="GO:0005829">
    <property type="term" value="C:cytosol"/>
    <property type="evidence" value="ECO:0007669"/>
    <property type="project" value="TreeGrafter"/>
</dbReference>
<dbReference type="GO" id="GO:0004022">
    <property type="term" value="F:alcohol dehydrogenase (NAD+) activity"/>
    <property type="evidence" value="ECO:0007669"/>
    <property type="project" value="UniProtKB-EC"/>
</dbReference>
<dbReference type="GO" id="GO:0006066">
    <property type="term" value="P:alcohol metabolic process"/>
    <property type="evidence" value="ECO:0007669"/>
    <property type="project" value="InterPro"/>
</dbReference>
<dbReference type="CDD" id="cd05323">
    <property type="entry name" value="ADH_SDR_c_like"/>
    <property type="match status" value="1"/>
</dbReference>
<dbReference type="FunFam" id="3.40.50.720:FF:000302">
    <property type="entry name" value="Alcohol dehydrogenase"/>
    <property type="match status" value="1"/>
</dbReference>
<dbReference type="Gene3D" id="3.40.50.720">
    <property type="entry name" value="NAD(P)-binding Rossmann-like Domain"/>
    <property type="match status" value="1"/>
</dbReference>
<dbReference type="InterPro" id="IPR002425">
    <property type="entry name" value="ADH_Drosophila-type"/>
</dbReference>
<dbReference type="InterPro" id="IPR036291">
    <property type="entry name" value="NAD(P)-bd_dom_sf"/>
</dbReference>
<dbReference type="InterPro" id="IPR020904">
    <property type="entry name" value="Sc_DH/Rdtase_CS"/>
</dbReference>
<dbReference type="InterPro" id="IPR002347">
    <property type="entry name" value="SDR_fam"/>
</dbReference>
<dbReference type="PANTHER" id="PTHR42901">
    <property type="entry name" value="ALCOHOL DEHYDROGENASE"/>
    <property type="match status" value="1"/>
</dbReference>
<dbReference type="PANTHER" id="PTHR42901:SF1">
    <property type="entry name" value="ALCOHOL DEHYDROGENASE"/>
    <property type="match status" value="1"/>
</dbReference>
<dbReference type="Pfam" id="PF00106">
    <property type="entry name" value="adh_short"/>
    <property type="match status" value="1"/>
</dbReference>
<dbReference type="PRINTS" id="PR01168">
    <property type="entry name" value="ALCDHDRGNASE"/>
</dbReference>
<dbReference type="PRINTS" id="PR01167">
    <property type="entry name" value="INSADHFAMILY"/>
</dbReference>
<dbReference type="PRINTS" id="PR00080">
    <property type="entry name" value="SDRFAMILY"/>
</dbReference>
<dbReference type="SUPFAM" id="SSF51735">
    <property type="entry name" value="NAD(P)-binding Rossmann-fold domains"/>
    <property type="match status" value="1"/>
</dbReference>
<dbReference type="PROSITE" id="PS00061">
    <property type="entry name" value="ADH_SHORT"/>
    <property type="match status" value="1"/>
</dbReference>
<proteinExistence type="inferred from homology"/>
<gene>
    <name type="primary">Adh</name>
    <name type="ORF">GA17214</name>
</gene>
<name>ADH_DROPS</name>
<evidence type="ECO:0000250" key="1"/>
<evidence type="ECO:0000255" key="2">
    <source>
        <dbReference type="PROSITE-ProRule" id="PRU10001"/>
    </source>
</evidence>
<evidence type="ECO:0000305" key="3"/>